<accession>Q8YUT3</accession>
<dbReference type="EMBL" id="BA000019">
    <property type="protein sequence ID" value="BAB73947.1"/>
    <property type="molecule type" value="Genomic_DNA"/>
</dbReference>
<dbReference type="PIR" id="AI2086">
    <property type="entry name" value="AI2086"/>
</dbReference>
<dbReference type="RefSeq" id="WP_010996406.1">
    <property type="nucleotide sequence ID" value="NZ_RSCN01000004.1"/>
</dbReference>
<dbReference type="PDB" id="6L5D">
    <property type="method" value="X-ray"/>
    <property type="resolution" value="2.55 A"/>
    <property type="chains" value="A/B=1-244"/>
</dbReference>
<dbReference type="PDBsum" id="6L5D"/>
<dbReference type="SMR" id="Q8YUT3"/>
<dbReference type="STRING" id="103690.gene:10494277"/>
<dbReference type="KEGG" id="ana:all2248"/>
<dbReference type="eggNOG" id="COG0154">
    <property type="taxonomic scope" value="Bacteria"/>
</dbReference>
<dbReference type="OrthoDB" id="480367at2"/>
<dbReference type="Proteomes" id="UP000002483">
    <property type="component" value="Chromosome"/>
</dbReference>
<dbReference type="GO" id="GO:0031411">
    <property type="term" value="C:gas vesicle"/>
    <property type="evidence" value="ECO:0007669"/>
    <property type="project" value="UniProtKB-SubCell"/>
</dbReference>
<dbReference type="GO" id="GO:0031412">
    <property type="term" value="P:gas vesicle organization"/>
    <property type="evidence" value="ECO:0007669"/>
    <property type="project" value="InterPro"/>
</dbReference>
<dbReference type="InterPro" id="IPR009430">
    <property type="entry name" value="GvpL/GvpF"/>
</dbReference>
<dbReference type="PANTHER" id="PTHR36852">
    <property type="entry name" value="PROTEIN GVPL 2"/>
    <property type="match status" value="1"/>
</dbReference>
<dbReference type="PANTHER" id="PTHR36852:SF1">
    <property type="entry name" value="PROTEIN GVPL 2"/>
    <property type="match status" value="1"/>
</dbReference>
<dbReference type="Pfam" id="PF06386">
    <property type="entry name" value="GvpL_GvpF"/>
    <property type="match status" value="1"/>
</dbReference>
<comment type="function">
    <text evidence="2 7">A minor component of the gas vesicle, may be involved in preventing GvpA aggregation during gas vesicle nucleation (By similarity). Gas vesicles (GV) are hollow, gas filled proteinaceous nanostructures. During planktonic growth they allow positioning of the organism at a favorable depth for light or nutrient acquisition (Probable).</text>
</comment>
<comment type="function">
    <text evidence="3">Cluster expression in E.coli (gvpA1-gvpA2-gvpC-gvpN-gvpJ-gvpK-gvpF-gvpG-gvpV-gvpW) allows cells to float and produces irregularly shaped gas vesicles.</text>
</comment>
<comment type="subunit">
    <text evidence="2">Binds GvpA.</text>
</comment>
<comment type="subcellular location">
    <subcellularLocation>
        <location evidence="1">Gas vesicle</location>
    </subcellularLocation>
    <text evidence="1">Probably faces the interior of the gas vesicle.</text>
</comment>
<comment type="domain">
    <text evidence="3">Has 2 domains with the C-terminal tail tucked between them. The C-terminus adopts a modified ferredoxin fold.</text>
</comment>
<comment type="similarity">
    <text evidence="6">Belongs to the gas vesicle GvpF/GvpL family.</text>
</comment>
<comment type="caution">
    <text evidence="3">Despite the presence of an intact gas vesicle cluster and gvpA transcripts, there is no evidence this strain produces gas vesicles.</text>
</comment>
<gene>
    <name evidence="4" type="primary">gvpF</name>
    <name evidence="8" type="ordered locus">all2248</name>
</gene>
<feature type="chain" id="PRO_0000458454" description="Gas vesicle protein F">
    <location>
        <begin position="1"/>
        <end position="244"/>
    </location>
</feature>
<feature type="strand" evidence="10">
    <location>
        <begin position="4"/>
        <end position="13"/>
    </location>
</feature>
<feature type="helix" evidence="10">
    <location>
        <begin position="24"/>
        <end position="26"/>
    </location>
</feature>
<feature type="strand" evidence="10">
    <location>
        <begin position="30"/>
        <end position="34"/>
    </location>
</feature>
<feature type="strand" evidence="10">
    <location>
        <begin position="37"/>
        <end position="47"/>
    </location>
</feature>
<feature type="helix" evidence="10">
    <location>
        <begin position="53"/>
        <end position="68"/>
    </location>
</feature>
<feature type="strand" evidence="10">
    <location>
        <begin position="82"/>
        <end position="84"/>
    </location>
</feature>
<feature type="helix" evidence="10">
    <location>
        <begin position="86"/>
        <end position="92"/>
    </location>
</feature>
<feature type="helix" evidence="10">
    <location>
        <begin position="95"/>
        <end position="97"/>
    </location>
</feature>
<feature type="helix" evidence="10">
    <location>
        <begin position="98"/>
        <end position="108"/>
    </location>
</feature>
<feature type="strand" evidence="10">
    <location>
        <begin position="111"/>
        <end position="120"/>
    </location>
</feature>
<feature type="helix" evidence="10">
    <location>
        <begin position="122"/>
        <end position="130"/>
    </location>
</feature>
<feature type="strand" evidence="10">
    <location>
        <begin position="131"/>
        <end position="133"/>
    </location>
</feature>
<feature type="turn" evidence="10">
    <location>
        <begin position="141"/>
        <end position="143"/>
    </location>
</feature>
<feature type="strand" evidence="10">
    <location>
        <begin position="144"/>
        <end position="146"/>
    </location>
</feature>
<feature type="helix" evidence="10">
    <location>
        <begin position="153"/>
        <end position="179"/>
    </location>
</feature>
<feature type="helix" evidence="10">
    <location>
        <begin position="180"/>
        <end position="182"/>
    </location>
</feature>
<feature type="strand" evidence="10">
    <location>
        <begin position="184"/>
        <end position="189"/>
    </location>
</feature>
<feature type="strand" evidence="10">
    <location>
        <begin position="192"/>
        <end position="205"/>
    </location>
</feature>
<feature type="helix" evidence="10">
    <location>
        <begin position="206"/>
        <end position="208"/>
    </location>
</feature>
<feature type="helix" evidence="10">
    <location>
        <begin position="209"/>
        <end position="221"/>
    </location>
</feature>
<feature type="turn" evidence="10">
    <location>
        <begin position="222"/>
        <end position="225"/>
    </location>
</feature>
<feature type="strand" evidence="10">
    <location>
        <begin position="226"/>
        <end position="235"/>
    </location>
</feature>
<feature type="turn" evidence="10">
    <location>
        <begin position="238"/>
        <end position="240"/>
    </location>
</feature>
<name>GVPF_NOSS1</name>
<organism>
    <name type="scientific">Nostoc sp. (strain PCC 7120 / SAG 25.82 / UTEX 2576)</name>
    <dbReference type="NCBI Taxonomy" id="103690"/>
    <lineage>
        <taxon>Bacteria</taxon>
        <taxon>Bacillati</taxon>
        <taxon>Cyanobacteriota</taxon>
        <taxon>Cyanophyceae</taxon>
        <taxon>Nostocales</taxon>
        <taxon>Nostocaceae</taxon>
        <taxon>Nostoc</taxon>
    </lineage>
</organism>
<proteinExistence type="evidence at protein level"/>
<reference evidence="8" key="1">
    <citation type="journal article" date="2001" name="DNA Res.">
        <title>Complete genomic sequence of the filamentous nitrogen-fixing cyanobacterium Anabaena sp. strain PCC 7120.</title>
        <authorList>
            <person name="Kaneko T."/>
            <person name="Nakamura Y."/>
            <person name="Wolk C.P."/>
            <person name="Kuritz T."/>
            <person name="Sasamoto S."/>
            <person name="Watanabe A."/>
            <person name="Iriguchi M."/>
            <person name="Ishikawa A."/>
            <person name="Kawashima K."/>
            <person name="Kimura T."/>
            <person name="Kishida Y."/>
            <person name="Kohara M."/>
            <person name="Matsumoto M."/>
            <person name="Matsuno A."/>
            <person name="Muraki A."/>
            <person name="Nakazaki N."/>
            <person name="Shimpo S."/>
            <person name="Sugimoto M."/>
            <person name="Takazawa M."/>
            <person name="Yamada M."/>
            <person name="Yasuda M."/>
            <person name="Tabata S."/>
        </authorList>
    </citation>
    <scope>NUCLEOTIDE SEQUENCE [LARGE SCALE GENOMIC DNA]</scope>
    <source>
        <strain>PCC 7120 / SAG 25.82 / UTEX 2576</strain>
    </source>
</reference>
<reference evidence="9" key="2">
    <citation type="journal article" date="2020" name="BMC Microbiol.">
        <title>The model cyanobacteria Anabaena sp. PCC 7120 possess an intact but partially degenerated gene cluster encoding gas vesicles.</title>
        <authorList>
            <person name="Cai K."/>
            <person name="Xu B.Y."/>
            <person name="Jiang Y.L."/>
            <person name="Wang Y."/>
            <person name="Chen Y."/>
            <person name="Zhou C.Z."/>
            <person name="Li Q."/>
        </authorList>
    </citation>
    <scope>X-RAY CRYSTALLOGRAPHY (2.55 ANGSTROMS)</scope>
    <scope>DOMAIN</scope>
    <scope>LACK OF GAS VESICLES IN VIVO</scope>
    <scope>FUNCTION IN E.COLI</scope>
    <source>
        <strain>PCC 7120 / SAG 25.82 / UTEX 2576</strain>
    </source>
</reference>
<keyword id="KW-0002">3D-structure</keyword>
<keyword id="KW-0304">Gas vesicle</keyword>
<keyword id="KW-1185">Reference proteome</keyword>
<sequence>MSSGLYLYGIFPDPIPETVTLQGLDSQLVYSQIIDGFTFLYSEAKQEKYLASRRNLISHEKVLEQAMHAGFRTLLPLRFGLVVKNWETVVTQLLQPYKAQLRELFQKLAGRREVSVKIFWDSKAELQAMMDSHQDLKQKRDQMEGKALSMEEVIHIGQLIESNLLSRKESIIQVFFDELKPLADEVIESDPMTEDMIYNAAFLIPWENESIFSQQVESIDHKFDERLRIRYNNFTAPYTFAQIS</sequence>
<evidence type="ECO:0000250" key="1">
    <source>
        <dbReference type="UniProtKB" id="A8Y9T3"/>
    </source>
</evidence>
<evidence type="ECO:0000250" key="2">
    <source>
        <dbReference type="UniProtKB" id="Q9HI21"/>
    </source>
</evidence>
<evidence type="ECO:0000269" key="3">
    <source>
    </source>
</evidence>
<evidence type="ECO:0000303" key="4">
    <source>
    </source>
</evidence>
<evidence type="ECO:0000303" key="5">
    <source>
    </source>
</evidence>
<evidence type="ECO:0000305" key="6"/>
<evidence type="ECO:0000305" key="7">
    <source>
    </source>
</evidence>
<evidence type="ECO:0000312" key="8">
    <source>
        <dbReference type="EMBL" id="BAB73947.1"/>
    </source>
</evidence>
<evidence type="ECO:0007744" key="9">
    <source>
        <dbReference type="PDB" id="6L5D"/>
    </source>
</evidence>
<evidence type="ECO:0007829" key="10">
    <source>
        <dbReference type="PDB" id="6L5D"/>
    </source>
</evidence>
<protein>
    <recommendedName>
        <fullName evidence="5">Gas vesicle protein F</fullName>
        <shortName evidence="4">GvpF</shortName>
    </recommendedName>
</protein>